<protein>
    <recommendedName>
        <fullName evidence="6">Short-chain dehydrogenase/reductase aba4</fullName>
        <ecNumber evidence="8">1.1.1.-</ecNumber>
    </recommendedName>
    <alternativeName>
        <fullName evidence="6">Abscisic acid biosynthesis cluster protein 4</fullName>
    </alternativeName>
</protein>
<name>ABA4_BOTFB</name>
<accession>A0A384JQF5</accession>
<keyword id="KW-0521">NADP</keyword>
<keyword id="KW-0560">Oxidoreductase</keyword>
<keyword id="KW-1185">Reference proteome</keyword>
<keyword id="KW-0843">Virulence</keyword>
<feature type="chain" id="PRO_0000448422" description="Short-chain dehydrogenase/reductase aba4">
    <location>
        <begin position="1"/>
        <end position="258"/>
    </location>
</feature>
<feature type="active site" description="Proton donor" evidence="2">
    <location>
        <position position="146"/>
    </location>
</feature>
<feature type="active site" description="Proton donor" evidence="2">
    <location>
        <position position="160"/>
    </location>
</feature>
<feature type="active site" description="Lowers pKa of active site Tyr" evidence="2">
    <location>
        <position position="164"/>
    </location>
</feature>
<feature type="binding site" evidence="1">
    <location>
        <position position="20"/>
    </location>
    <ligand>
        <name>NADP(+)</name>
        <dbReference type="ChEBI" id="CHEBI:58349"/>
    </ligand>
</feature>
<feature type="binding site" evidence="1">
    <location>
        <position position="66"/>
    </location>
    <ligand>
        <name>NADP(+)</name>
        <dbReference type="ChEBI" id="CHEBI:58349"/>
    </ligand>
</feature>
<feature type="binding site" evidence="1">
    <location>
        <position position="130"/>
    </location>
    <ligand>
        <name>NADP(+)</name>
        <dbReference type="ChEBI" id="CHEBI:58349"/>
    </ligand>
</feature>
<feature type="binding site" evidence="2">
    <location>
        <position position="160"/>
    </location>
    <ligand>
        <name>NADP(+)</name>
        <dbReference type="ChEBI" id="CHEBI:58349"/>
    </ligand>
</feature>
<feature type="binding site" evidence="2">
    <location>
        <position position="164"/>
    </location>
    <ligand>
        <name>NADP(+)</name>
        <dbReference type="ChEBI" id="CHEBI:58349"/>
    </ligand>
</feature>
<feature type="binding site" evidence="2">
    <location>
        <position position="193"/>
    </location>
    <ligand>
        <name>NADP(+)</name>
        <dbReference type="ChEBI" id="CHEBI:58349"/>
    </ligand>
</feature>
<feature type="binding site" evidence="1">
    <location>
        <position position="195"/>
    </location>
    <ligand>
        <name>NADP(+)</name>
        <dbReference type="ChEBI" id="CHEBI:58349"/>
    </ligand>
</feature>
<dbReference type="EC" id="1.1.1.-" evidence="8"/>
<dbReference type="EMBL" id="CP009812">
    <property type="protein sequence ID" value="ATZ52740.1"/>
    <property type="molecule type" value="Genomic_DNA"/>
</dbReference>
<dbReference type="RefSeq" id="XP_001553969.1">
    <property type="nucleotide sequence ID" value="XM_001553919.1"/>
</dbReference>
<dbReference type="SMR" id="A0A384JQF5"/>
<dbReference type="EnsemblFungi" id="Bcin08g03830.1">
    <property type="protein sequence ID" value="Bcin08p03830.1"/>
    <property type="gene ID" value="Bcin08g03830"/>
</dbReference>
<dbReference type="KEGG" id="bfu:BCIN_08g03830"/>
<dbReference type="VEuPathDB" id="FungiDB:Bcin08g03830"/>
<dbReference type="OrthoDB" id="1669814at2759"/>
<dbReference type="Proteomes" id="UP000001798">
    <property type="component" value="Chromosome bcin08"/>
</dbReference>
<dbReference type="GO" id="GO:0016491">
    <property type="term" value="F:oxidoreductase activity"/>
    <property type="evidence" value="ECO:0007669"/>
    <property type="project" value="UniProtKB-KW"/>
</dbReference>
<dbReference type="GO" id="GO:0009688">
    <property type="term" value="P:abscisic acid biosynthetic process"/>
    <property type="evidence" value="ECO:0000315"/>
    <property type="project" value="GO_Central"/>
</dbReference>
<dbReference type="CDD" id="cd05233">
    <property type="entry name" value="SDR_c"/>
    <property type="match status" value="1"/>
</dbReference>
<dbReference type="FunFam" id="3.40.50.720:FF:000084">
    <property type="entry name" value="Short-chain dehydrogenase reductase"/>
    <property type="match status" value="1"/>
</dbReference>
<dbReference type="Gene3D" id="3.40.50.720">
    <property type="entry name" value="NAD(P)-binding Rossmann-like Domain"/>
    <property type="match status" value="1"/>
</dbReference>
<dbReference type="InterPro" id="IPR036291">
    <property type="entry name" value="NAD(P)-bd_dom_sf"/>
</dbReference>
<dbReference type="InterPro" id="IPR020904">
    <property type="entry name" value="Sc_DH/Rdtase_CS"/>
</dbReference>
<dbReference type="InterPro" id="IPR002347">
    <property type="entry name" value="SDR_fam"/>
</dbReference>
<dbReference type="PANTHER" id="PTHR24321">
    <property type="entry name" value="DEHYDROGENASES, SHORT CHAIN"/>
    <property type="match status" value="1"/>
</dbReference>
<dbReference type="PANTHER" id="PTHR24321:SF8">
    <property type="entry name" value="ESTRADIOL 17-BETA-DEHYDROGENASE 8-RELATED"/>
    <property type="match status" value="1"/>
</dbReference>
<dbReference type="Pfam" id="PF13561">
    <property type="entry name" value="adh_short_C2"/>
    <property type="match status" value="1"/>
</dbReference>
<dbReference type="PRINTS" id="PR00081">
    <property type="entry name" value="GDHRDH"/>
</dbReference>
<dbReference type="PRINTS" id="PR00080">
    <property type="entry name" value="SDRFAMILY"/>
</dbReference>
<dbReference type="SUPFAM" id="SSF51735">
    <property type="entry name" value="NAD(P)-binding Rossmann-fold domains"/>
    <property type="match status" value="1"/>
</dbReference>
<dbReference type="PROSITE" id="PS00061">
    <property type="entry name" value="ADH_SHORT"/>
    <property type="match status" value="1"/>
</dbReference>
<evidence type="ECO:0000250" key="1">
    <source>
        <dbReference type="UniProtKB" id="L0E2Z4"/>
    </source>
</evidence>
<evidence type="ECO:0000250" key="2">
    <source>
        <dbReference type="UniProtKB" id="O93868"/>
    </source>
</evidence>
<evidence type="ECO:0000269" key="3">
    <source>
    </source>
</evidence>
<evidence type="ECO:0000269" key="4">
    <source>
    </source>
</evidence>
<evidence type="ECO:0000269" key="5">
    <source>
    </source>
</evidence>
<evidence type="ECO:0000303" key="6">
    <source>
    </source>
</evidence>
<evidence type="ECO:0000305" key="7"/>
<evidence type="ECO:0000305" key="8">
    <source>
    </source>
</evidence>
<reference key="1">
    <citation type="journal article" date="2011" name="PLoS Genet.">
        <title>Genomic analysis of the necrotrophic fungal pathogens Sclerotinia sclerotiorum and Botrytis cinerea.</title>
        <authorList>
            <person name="Amselem J."/>
            <person name="Cuomo C.A."/>
            <person name="van Kan J.A.L."/>
            <person name="Viaud M."/>
            <person name="Benito E.P."/>
            <person name="Couloux A."/>
            <person name="Coutinho P.M."/>
            <person name="de Vries R.P."/>
            <person name="Dyer P.S."/>
            <person name="Fillinger S."/>
            <person name="Fournier E."/>
            <person name="Gout L."/>
            <person name="Hahn M."/>
            <person name="Kohn L."/>
            <person name="Lapalu N."/>
            <person name="Plummer K.M."/>
            <person name="Pradier J.-M."/>
            <person name="Quevillon E."/>
            <person name="Sharon A."/>
            <person name="Simon A."/>
            <person name="ten Have A."/>
            <person name="Tudzynski B."/>
            <person name="Tudzynski P."/>
            <person name="Wincker P."/>
            <person name="Andrew M."/>
            <person name="Anthouard V."/>
            <person name="Beever R.E."/>
            <person name="Beffa R."/>
            <person name="Benoit I."/>
            <person name="Bouzid O."/>
            <person name="Brault B."/>
            <person name="Chen Z."/>
            <person name="Choquer M."/>
            <person name="Collemare J."/>
            <person name="Cotton P."/>
            <person name="Danchin E.G."/>
            <person name="Da Silva C."/>
            <person name="Gautier A."/>
            <person name="Giraud C."/>
            <person name="Giraud T."/>
            <person name="Gonzalez C."/>
            <person name="Grossetete S."/>
            <person name="Gueldener U."/>
            <person name="Henrissat B."/>
            <person name="Howlett B.J."/>
            <person name="Kodira C."/>
            <person name="Kretschmer M."/>
            <person name="Lappartient A."/>
            <person name="Leroch M."/>
            <person name="Levis C."/>
            <person name="Mauceli E."/>
            <person name="Neuveglise C."/>
            <person name="Oeser B."/>
            <person name="Pearson M."/>
            <person name="Poulain J."/>
            <person name="Poussereau N."/>
            <person name="Quesneville H."/>
            <person name="Rascle C."/>
            <person name="Schumacher J."/>
            <person name="Segurens B."/>
            <person name="Sexton A."/>
            <person name="Silva E."/>
            <person name="Sirven C."/>
            <person name="Soanes D.M."/>
            <person name="Talbot N.J."/>
            <person name="Templeton M."/>
            <person name="Yandava C."/>
            <person name="Yarden O."/>
            <person name="Zeng Q."/>
            <person name="Rollins J.A."/>
            <person name="Lebrun M.-H."/>
            <person name="Dickman M."/>
        </authorList>
    </citation>
    <scope>NUCLEOTIDE SEQUENCE [LARGE SCALE GENOMIC DNA]</scope>
    <source>
        <strain>B05.10</strain>
    </source>
</reference>
<reference key="2">
    <citation type="journal article" date="2012" name="Eukaryot. Cell">
        <title>Genome update of Botrytis cinerea strains B05.10 and T4.</title>
        <authorList>
            <person name="Staats M."/>
            <person name="van Kan J.A.L."/>
        </authorList>
    </citation>
    <scope>NUCLEOTIDE SEQUENCE [LARGE SCALE GENOMIC DNA]</scope>
    <source>
        <strain>B05.10</strain>
    </source>
</reference>
<reference key="3">
    <citation type="journal article" date="2017" name="Mol. Plant Pathol.">
        <title>A gapless genome sequence of the fungus Botrytis cinerea.</title>
        <authorList>
            <person name="van Kan J.A.L."/>
            <person name="Stassen J.H.M."/>
            <person name="Mosbach A."/>
            <person name="van der Lee T.A.J."/>
            <person name="Faino L."/>
            <person name="Farmer A.D."/>
            <person name="Papasotiriou D.G."/>
            <person name="Zhou S."/>
            <person name="Seidl M.F."/>
            <person name="Cottam E."/>
            <person name="Edel D."/>
            <person name="Hahn M."/>
            <person name="Schwartz D.C."/>
            <person name="Dietrich R.A."/>
            <person name="Widdison S."/>
            <person name="Scalliet G."/>
        </authorList>
    </citation>
    <scope>NUCLEOTIDE SEQUENCE [LARGE SCALE GENOMIC DNA]</scope>
    <source>
        <strain>B05.10</strain>
    </source>
</reference>
<reference key="4">
    <citation type="journal article" date="2004" name="Appl. Environ. Microbiol.">
        <title>The P450 monooxygenase BcABA1 is essential for abscisic acid biosynthesis in Botrytis cinerea.</title>
        <authorList>
            <person name="Siewers V."/>
            <person name="Smedsgaard J."/>
            <person name="Tudzynski P."/>
        </authorList>
    </citation>
    <scope>FUNCTION</scope>
</reference>
<reference key="5">
    <citation type="journal article" date="2006" name="Appl. Environ. Microbiol.">
        <title>Identification of an abscisic acid gene cluster in the grey mold Botrytis cinerea.</title>
        <authorList>
            <person name="Siewers V."/>
            <person name="Kokkelink L."/>
            <person name="Smedsgaard J."/>
            <person name="Tudzynski P."/>
        </authorList>
    </citation>
    <scope>INDUCTION</scope>
    <scope>FUNCTION</scope>
    <scope>DISRUPTION PHENOTYPE</scope>
    <scope>PATHWAY</scope>
</reference>
<reference key="6">
    <citation type="journal article" date="2018" name="J. Am. Chem. Soc.">
        <title>Unveiling biosynthesis of the phytohormone abscisic acid in fungi: unprecedented mechanism of core scaffold formation catalyzed by an unusual sesquiterpene synthase.</title>
        <authorList>
            <person name="Takino J."/>
            <person name="Kozaki T."/>
            <person name="Sato Y."/>
            <person name="Liu C."/>
            <person name="Ozaki T."/>
            <person name="Minami A."/>
            <person name="Oikawa H."/>
        </authorList>
    </citation>
    <scope>FUNCTION</scope>
</reference>
<proteinExistence type="evidence at transcript level"/>
<organism>
    <name type="scientific">Botryotinia fuckeliana (strain B05.10)</name>
    <name type="common">Noble rot fungus</name>
    <name type="synonym">Botrytis cinerea</name>
    <dbReference type="NCBI Taxonomy" id="332648"/>
    <lineage>
        <taxon>Eukaryota</taxon>
        <taxon>Fungi</taxon>
        <taxon>Dikarya</taxon>
        <taxon>Ascomycota</taxon>
        <taxon>Pezizomycotina</taxon>
        <taxon>Leotiomycetes</taxon>
        <taxon>Helotiales</taxon>
        <taxon>Sclerotiniaceae</taxon>
        <taxon>Botrytis</taxon>
    </lineage>
</organism>
<sequence>MSSQPFTNKVIALTGSASGIGLETAKLLASRGARLSLADIQEDKLKELQAQLESEYYVDVITTKVDVRKFGEVEAWINKTIDNFGKLDGSANLAGVAPESIGLKGIVEQDLDEWEFVLGVNLTGTMNSLKAQLKVMANNGSIVNASSIRGLTGAAKNASYSSAKHGIIGLTRTAAKEVGGKGIRVNAICPGRISTPMLKTAENSIGLHLQPGSANYPPIALGRDGEAKEVAQLVAFLLSDESTYISGADISIDGGWRC</sequence>
<gene>
    <name evidence="6" type="primary">aba4</name>
    <name type="ORF">BCIN_08g03830</name>
</gene>
<comment type="function">
    <text evidence="3 4 5 8">Short-chain dehydrogenase/reductase; part of the gene cluster that mediates the biosynthesis of abscisic acid (ABA), a phytohormone that acts antagonistically toward salicylic acid (SA), jasmonic acid (JA) and ethylene (ETH) signaling, to impede plant defense responses (PubMed:15240257, PubMed:16820452). The first step of the pathway catalyzes the reaction from farnesyl diphosphate to alpha-ionylideneethane performed by the alpha-ionylideneethane synthase aba3 via a three-step reaction mechanism involving 2 neutral intermediates, beta-farnesene and allofarnesene (PubMed:30226766). The cytochrome P450 monooxygenase aba1 might then be involved in the conversion of alpha-ionylideneethane to alpha-ionylideneacetic acid (Probable). Alpha-ionylideneacetic acid is further converted to abscisic acid in 2 steps involving the cytochrome P450 monooxygenase aba2 and the short-chain dehydrogenase/reductase aba4, via the intermediates 1'-deoxy-ABA or 1',4'-trans-diol-ABA, depending on the order of action of these 2 enzymes (Probable). Aba2 is responsible for the hydroxylation of carbon atom C-1' and aba4 might be involved in the oxidation of the C-4' carbon atom (PubMed:16820452).</text>
</comment>
<comment type="pathway">
    <text evidence="4">Hormone biosynthesis.</text>
</comment>
<comment type="induction">
    <text evidence="4">Constitutively expressed at a low level.</text>
</comment>
<comment type="disruption phenotype">
    <text evidence="4">Reduces the production of abscisic acid (ABA) and accumulates a compound that corresponds probably to 1',4'-trans-diol-ABA.</text>
</comment>
<comment type="similarity">
    <text evidence="7">Belongs to the short-chain dehydrogenases/reductases (SDR) family.</text>
</comment>